<organism>
    <name type="scientific">Borrelia turicatae (strain 91E135)</name>
    <dbReference type="NCBI Taxonomy" id="314724"/>
    <lineage>
        <taxon>Bacteria</taxon>
        <taxon>Pseudomonadati</taxon>
        <taxon>Spirochaetota</taxon>
        <taxon>Spirochaetia</taxon>
        <taxon>Spirochaetales</taxon>
        <taxon>Borreliaceae</taxon>
        <taxon>Borrelia</taxon>
    </lineage>
</organism>
<reference key="1">
    <citation type="submission" date="2004-12" db="EMBL/GenBank/DDBJ databases">
        <title>The genome sequence of Borrelia hermsii and Borrelia turicatae: comparative analysis of two agents of endemic N. America relapsing fever.</title>
        <authorList>
            <person name="Porcella S.F."/>
            <person name="Raffel S.J."/>
            <person name="Schrumpf M.E."/>
            <person name="Montgomery B."/>
            <person name="Smith T."/>
            <person name="Schwan T.G."/>
        </authorList>
    </citation>
    <scope>NUCLEOTIDE SEQUENCE [LARGE SCALE GENOMIC DNA]</scope>
    <source>
        <strain>91E135</strain>
    </source>
</reference>
<proteinExistence type="inferred from homology"/>
<sequence length="180" mass="19441">MSFKGTTVIAIRRGGKTVVAADGQVTFGYTVLKSNAIKIRKLFNGKILAGFAGSTSDAITLFEKFEEKVKAREDGIIDIKRAAVELAKDWRSDKILHKLEAMMLVADSENILLISGTGDVVEPEEDVISIGSGGNYAYSAALAYMENKKLSAADIAFKSLKVAARVCIYTNSNIVLEEIS</sequence>
<name>HSLV_BORT9</name>
<accession>A1QZ92</accession>
<gene>
    <name evidence="1" type="primary">hslV</name>
    <name type="ordered locus">BT0296</name>
</gene>
<protein>
    <recommendedName>
        <fullName evidence="1">ATP-dependent protease subunit HslV</fullName>
        <ecNumber evidence="1">3.4.25.2</ecNumber>
    </recommendedName>
</protein>
<feature type="chain" id="PRO_1000192676" description="ATP-dependent protease subunit HslV">
    <location>
        <begin position="1"/>
        <end position="180"/>
    </location>
</feature>
<feature type="active site" evidence="1">
    <location>
        <position position="6"/>
    </location>
</feature>
<feature type="binding site" evidence="1">
    <location>
        <position position="164"/>
    </location>
    <ligand>
        <name>Na(+)</name>
        <dbReference type="ChEBI" id="CHEBI:29101"/>
    </ligand>
</feature>
<feature type="binding site" evidence="1">
    <location>
        <position position="167"/>
    </location>
    <ligand>
        <name>Na(+)</name>
        <dbReference type="ChEBI" id="CHEBI:29101"/>
    </ligand>
</feature>
<feature type="binding site" evidence="1">
    <location>
        <position position="170"/>
    </location>
    <ligand>
        <name>Na(+)</name>
        <dbReference type="ChEBI" id="CHEBI:29101"/>
    </ligand>
</feature>
<evidence type="ECO:0000255" key="1">
    <source>
        <dbReference type="HAMAP-Rule" id="MF_00248"/>
    </source>
</evidence>
<dbReference type="EC" id="3.4.25.2" evidence="1"/>
<dbReference type="EMBL" id="CP000049">
    <property type="protein sequence ID" value="AAX17634.1"/>
    <property type="molecule type" value="Genomic_DNA"/>
</dbReference>
<dbReference type="RefSeq" id="WP_011772253.1">
    <property type="nucleotide sequence ID" value="NZ_CP073176.1"/>
</dbReference>
<dbReference type="SMR" id="A1QZ92"/>
<dbReference type="KEGG" id="btu:BT0296"/>
<dbReference type="eggNOG" id="COG5405">
    <property type="taxonomic scope" value="Bacteria"/>
</dbReference>
<dbReference type="HOGENOM" id="CLU_093872_1_0_12"/>
<dbReference type="Proteomes" id="UP000001205">
    <property type="component" value="Chromosome"/>
</dbReference>
<dbReference type="GO" id="GO:0009376">
    <property type="term" value="C:HslUV protease complex"/>
    <property type="evidence" value="ECO:0007669"/>
    <property type="project" value="UniProtKB-UniRule"/>
</dbReference>
<dbReference type="GO" id="GO:0005839">
    <property type="term" value="C:proteasome core complex"/>
    <property type="evidence" value="ECO:0007669"/>
    <property type="project" value="InterPro"/>
</dbReference>
<dbReference type="GO" id="GO:0046872">
    <property type="term" value="F:metal ion binding"/>
    <property type="evidence" value="ECO:0007669"/>
    <property type="project" value="UniProtKB-KW"/>
</dbReference>
<dbReference type="GO" id="GO:0004298">
    <property type="term" value="F:threonine-type endopeptidase activity"/>
    <property type="evidence" value="ECO:0007669"/>
    <property type="project" value="UniProtKB-KW"/>
</dbReference>
<dbReference type="GO" id="GO:0051603">
    <property type="term" value="P:proteolysis involved in protein catabolic process"/>
    <property type="evidence" value="ECO:0007669"/>
    <property type="project" value="InterPro"/>
</dbReference>
<dbReference type="CDD" id="cd01913">
    <property type="entry name" value="protease_HslV"/>
    <property type="match status" value="1"/>
</dbReference>
<dbReference type="Gene3D" id="3.60.20.10">
    <property type="entry name" value="Glutamine Phosphoribosylpyrophosphate, subunit 1, domain 1"/>
    <property type="match status" value="1"/>
</dbReference>
<dbReference type="HAMAP" id="MF_00248">
    <property type="entry name" value="HslV"/>
    <property type="match status" value="1"/>
</dbReference>
<dbReference type="InterPro" id="IPR022281">
    <property type="entry name" value="ATP-dep_Prtase_HsIV_su"/>
</dbReference>
<dbReference type="InterPro" id="IPR029055">
    <property type="entry name" value="Ntn_hydrolases_N"/>
</dbReference>
<dbReference type="InterPro" id="IPR001353">
    <property type="entry name" value="Proteasome_sua/b"/>
</dbReference>
<dbReference type="InterPro" id="IPR023333">
    <property type="entry name" value="Proteasome_suB-type"/>
</dbReference>
<dbReference type="NCBIfam" id="TIGR03692">
    <property type="entry name" value="ATP_dep_HslV"/>
    <property type="match status" value="1"/>
</dbReference>
<dbReference type="NCBIfam" id="NF003964">
    <property type="entry name" value="PRK05456.1"/>
    <property type="match status" value="1"/>
</dbReference>
<dbReference type="PANTHER" id="PTHR32194:SF0">
    <property type="entry name" value="ATP-DEPENDENT PROTEASE SUBUNIT HSLV"/>
    <property type="match status" value="1"/>
</dbReference>
<dbReference type="PANTHER" id="PTHR32194">
    <property type="entry name" value="METALLOPROTEASE TLDD"/>
    <property type="match status" value="1"/>
</dbReference>
<dbReference type="Pfam" id="PF00227">
    <property type="entry name" value="Proteasome"/>
    <property type="match status" value="1"/>
</dbReference>
<dbReference type="PIRSF" id="PIRSF039093">
    <property type="entry name" value="HslV"/>
    <property type="match status" value="1"/>
</dbReference>
<dbReference type="SUPFAM" id="SSF56235">
    <property type="entry name" value="N-terminal nucleophile aminohydrolases (Ntn hydrolases)"/>
    <property type="match status" value="1"/>
</dbReference>
<dbReference type="PROSITE" id="PS51476">
    <property type="entry name" value="PROTEASOME_BETA_2"/>
    <property type="match status" value="1"/>
</dbReference>
<comment type="function">
    <text evidence="1">Protease subunit of a proteasome-like degradation complex believed to be a general protein degrading machinery.</text>
</comment>
<comment type="catalytic activity">
    <reaction evidence="1">
        <text>ATP-dependent cleavage of peptide bonds with broad specificity.</text>
        <dbReference type="EC" id="3.4.25.2"/>
    </reaction>
</comment>
<comment type="activity regulation">
    <text evidence="1">Allosterically activated by HslU binding.</text>
</comment>
<comment type="subunit">
    <text evidence="1">A double ring-shaped homohexamer of HslV is capped on each side by a ring-shaped HslU homohexamer. The assembly of the HslU/HslV complex is dependent on binding of ATP.</text>
</comment>
<comment type="subcellular location">
    <subcellularLocation>
        <location evidence="1">Cytoplasm</location>
    </subcellularLocation>
</comment>
<comment type="similarity">
    <text evidence="1">Belongs to the peptidase T1B family. HslV subfamily.</text>
</comment>
<keyword id="KW-0021">Allosteric enzyme</keyword>
<keyword id="KW-0963">Cytoplasm</keyword>
<keyword id="KW-0378">Hydrolase</keyword>
<keyword id="KW-0479">Metal-binding</keyword>
<keyword id="KW-0645">Protease</keyword>
<keyword id="KW-1185">Reference proteome</keyword>
<keyword id="KW-0915">Sodium</keyword>
<keyword id="KW-0888">Threonine protease</keyword>